<organism>
    <name type="scientific">Pteropus scapulatus</name>
    <name type="common">Little red flying fox</name>
    <dbReference type="NCBI Taxonomy" id="94117"/>
    <lineage>
        <taxon>Eukaryota</taxon>
        <taxon>Metazoa</taxon>
        <taxon>Chordata</taxon>
        <taxon>Craniata</taxon>
        <taxon>Vertebrata</taxon>
        <taxon>Euteleostomi</taxon>
        <taxon>Mammalia</taxon>
        <taxon>Eutheria</taxon>
        <taxon>Laurasiatheria</taxon>
        <taxon>Chiroptera</taxon>
        <taxon>Yinpterochiroptera</taxon>
        <taxon>Pteropodoidea</taxon>
        <taxon>Pteropodidae</taxon>
        <taxon>Pteropodinae</taxon>
        <taxon>Pteropus</taxon>
    </lineage>
</organism>
<evidence type="ECO:0000250" key="1"/>
<evidence type="ECO:0000250" key="2">
    <source>
        <dbReference type="UniProtKB" id="P00157"/>
    </source>
</evidence>
<evidence type="ECO:0000255" key="3">
    <source>
        <dbReference type="PROSITE-ProRule" id="PRU00967"/>
    </source>
</evidence>
<evidence type="ECO:0000255" key="4">
    <source>
        <dbReference type="PROSITE-ProRule" id="PRU00968"/>
    </source>
</evidence>
<sequence length="379" mass="42751">MTNIRKSHPLFKIINDSLIDLPAPSSISSWWNFGSLLGICLAIQILTGLFLAMHYTSDTTTAFQSVTHICRDVNYGWILRYLHANGASMFFICLFLHVGRGLYYGSYIYKETWNVGVILLFAVMATAFMGYVLPWGQMSFWGATVITNLLSAIPYIGTNLVEWIWGGFSVDKATLTRFFAFHFLLPFIISALVMVHLLFLHETGSNNPTGIPSDSDMIPFHPYYTIKDMLGALAMILVLMTLVLFSPDLLGDPDNYIPANPLNTPPHIKPEWYFLFAYAILRSIPNKLGGVLALVLSILILIVMPLLHTSKQRSMMFRPLSQCLFWLLVADLLTLTWIGGQPVEHPFIIIGQLASILYFLLILVLMPITSIVENHLLKW</sequence>
<geneLocation type="mitochondrion"/>
<feature type="chain" id="PRO_0000061466" description="Cytochrome b">
    <location>
        <begin position="1"/>
        <end position="379"/>
    </location>
</feature>
<feature type="transmembrane region" description="Helical" evidence="2">
    <location>
        <begin position="33"/>
        <end position="53"/>
    </location>
</feature>
<feature type="transmembrane region" description="Helical" evidence="2">
    <location>
        <begin position="77"/>
        <end position="98"/>
    </location>
</feature>
<feature type="transmembrane region" description="Helical" evidence="2">
    <location>
        <begin position="113"/>
        <end position="133"/>
    </location>
</feature>
<feature type="transmembrane region" description="Helical" evidence="2">
    <location>
        <begin position="178"/>
        <end position="198"/>
    </location>
</feature>
<feature type="transmembrane region" description="Helical" evidence="2">
    <location>
        <begin position="226"/>
        <end position="246"/>
    </location>
</feature>
<feature type="transmembrane region" description="Helical" evidence="2">
    <location>
        <begin position="288"/>
        <end position="308"/>
    </location>
</feature>
<feature type="transmembrane region" description="Helical" evidence="2">
    <location>
        <begin position="320"/>
        <end position="340"/>
    </location>
</feature>
<feature type="transmembrane region" description="Helical" evidence="2">
    <location>
        <begin position="347"/>
        <end position="367"/>
    </location>
</feature>
<feature type="binding site" description="axial binding residue" evidence="2">
    <location>
        <position position="83"/>
    </location>
    <ligand>
        <name>heme b</name>
        <dbReference type="ChEBI" id="CHEBI:60344"/>
        <label>b562</label>
    </ligand>
    <ligandPart>
        <name>Fe</name>
        <dbReference type="ChEBI" id="CHEBI:18248"/>
    </ligandPart>
</feature>
<feature type="binding site" description="axial binding residue" evidence="2">
    <location>
        <position position="97"/>
    </location>
    <ligand>
        <name>heme b</name>
        <dbReference type="ChEBI" id="CHEBI:60344"/>
        <label>b566</label>
    </ligand>
    <ligandPart>
        <name>Fe</name>
        <dbReference type="ChEBI" id="CHEBI:18248"/>
    </ligandPart>
</feature>
<feature type="binding site" description="axial binding residue" evidence="2">
    <location>
        <position position="182"/>
    </location>
    <ligand>
        <name>heme b</name>
        <dbReference type="ChEBI" id="CHEBI:60344"/>
        <label>b562</label>
    </ligand>
    <ligandPart>
        <name>Fe</name>
        <dbReference type="ChEBI" id="CHEBI:18248"/>
    </ligandPart>
</feature>
<feature type="binding site" description="axial binding residue" evidence="2">
    <location>
        <position position="196"/>
    </location>
    <ligand>
        <name>heme b</name>
        <dbReference type="ChEBI" id="CHEBI:60344"/>
        <label>b566</label>
    </ligand>
    <ligandPart>
        <name>Fe</name>
        <dbReference type="ChEBI" id="CHEBI:18248"/>
    </ligandPart>
</feature>
<feature type="binding site" evidence="2">
    <location>
        <position position="201"/>
    </location>
    <ligand>
        <name>a ubiquinone</name>
        <dbReference type="ChEBI" id="CHEBI:16389"/>
    </ligand>
</feature>
<name>CYB_PTESA</name>
<dbReference type="EMBL" id="AF321050">
    <property type="protein sequence ID" value="AAG37923.1"/>
    <property type="molecule type" value="Genomic_DNA"/>
</dbReference>
<dbReference type="RefSeq" id="NP_071654.1">
    <property type="nucleotide sequence ID" value="NC_002619.1"/>
</dbReference>
<dbReference type="SMR" id="Q9G3S4"/>
<dbReference type="GeneID" id="802296"/>
<dbReference type="CTD" id="4519"/>
<dbReference type="GO" id="GO:0005743">
    <property type="term" value="C:mitochondrial inner membrane"/>
    <property type="evidence" value="ECO:0007669"/>
    <property type="project" value="UniProtKB-SubCell"/>
</dbReference>
<dbReference type="GO" id="GO:0045275">
    <property type="term" value="C:respiratory chain complex III"/>
    <property type="evidence" value="ECO:0007669"/>
    <property type="project" value="InterPro"/>
</dbReference>
<dbReference type="GO" id="GO:0046872">
    <property type="term" value="F:metal ion binding"/>
    <property type="evidence" value="ECO:0007669"/>
    <property type="project" value="UniProtKB-KW"/>
</dbReference>
<dbReference type="GO" id="GO:0008121">
    <property type="term" value="F:ubiquinol-cytochrome-c reductase activity"/>
    <property type="evidence" value="ECO:0007669"/>
    <property type="project" value="InterPro"/>
</dbReference>
<dbReference type="GO" id="GO:0006122">
    <property type="term" value="P:mitochondrial electron transport, ubiquinol to cytochrome c"/>
    <property type="evidence" value="ECO:0007669"/>
    <property type="project" value="TreeGrafter"/>
</dbReference>
<dbReference type="CDD" id="cd00290">
    <property type="entry name" value="cytochrome_b_C"/>
    <property type="match status" value="1"/>
</dbReference>
<dbReference type="CDD" id="cd00284">
    <property type="entry name" value="Cytochrome_b_N"/>
    <property type="match status" value="1"/>
</dbReference>
<dbReference type="FunFam" id="1.20.810.10:FF:000002">
    <property type="entry name" value="Cytochrome b"/>
    <property type="match status" value="1"/>
</dbReference>
<dbReference type="Gene3D" id="1.20.810.10">
    <property type="entry name" value="Cytochrome Bc1 Complex, Chain C"/>
    <property type="match status" value="1"/>
</dbReference>
<dbReference type="InterPro" id="IPR005798">
    <property type="entry name" value="Cyt_b/b6_C"/>
</dbReference>
<dbReference type="InterPro" id="IPR036150">
    <property type="entry name" value="Cyt_b/b6_C_sf"/>
</dbReference>
<dbReference type="InterPro" id="IPR005797">
    <property type="entry name" value="Cyt_b/b6_N"/>
</dbReference>
<dbReference type="InterPro" id="IPR027387">
    <property type="entry name" value="Cytb/b6-like_sf"/>
</dbReference>
<dbReference type="InterPro" id="IPR030689">
    <property type="entry name" value="Cytochrome_b"/>
</dbReference>
<dbReference type="InterPro" id="IPR048260">
    <property type="entry name" value="Cytochrome_b_C_euk/bac"/>
</dbReference>
<dbReference type="InterPro" id="IPR048259">
    <property type="entry name" value="Cytochrome_b_N_euk/bac"/>
</dbReference>
<dbReference type="InterPro" id="IPR016174">
    <property type="entry name" value="Di-haem_cyt_TM"/>
</dbReference>
<dbReference type="PANTHER" id="PTHR19271">
    <property type="entry name" value="CYTOCHROME B"/>
    <property type="match status" value="1"/>
</dbReference>
<dbReference type="PANTHER" id="PTHR19271:SF16">
    <property type="entry name" value="CYTOCHROME B"/>
    <property type="match status" value="1"/>
</dbReference>
<dbReference type="Pfam" id="PF00032">
    <property type="entry name" value="Cytochrom_B_C"/>
    <property type="match status" value="1"/>
</dbReference>
<dbReference type="Pfam" id="PF00033">
    <property type="entry name" value="Cytochrome_B"/>
    <property type="match status" value="1"/>
</dbReference>
<dbReference type="PIRSF" id="PIRSF038885">
    <property type="entry name" value="COB"/>
    <property type="match status" value="1"/>
</dbReference>
<dbReference type="SUPFAM" id="SSF81648">
    <property type="entry name" value="a domain/subunit of cytochrome bc1 complex (Ubiquinol-cytochrome c reductase)"/>
    <property type="match status" value="1"/>
</dbReference>
<dbReference type="SUPFAM" id="SSF81342">
    <property type="entry name" value="Transmembrane di-heme cytochromes"/>
    <property type="match status" value="1"/>
</dbReference>
<dbReference type="PROSITE" id="PS51003">
    <property type="entry name" value="CYTB_CTER"/>
    <property type="match status" value="1"/>
</dbReference>
<dbReference type="PROSITE" id="PS51002">
    <property type="entry name" value="CYTB_NTER"/>
    <property type="match status" value="1"/>
</dbReference>
<accession>Q9G3S4</accession>
<proteinExistence type="inferred from homology"/>
<reference key="1">
    <citation type="journal article" date="2001" name="Mol. Biol. Evol.">
        <title>Implications for bat evolution from two new complete mitochondrial genomes.</title>
        <authorList>
            <person name="Lin Y.-H."/>
            <person name="Penny D."/>
        </authorList>
    </citation>
    <scope>NUCLEOTIDE SEQUENCE [GENOMIC DNA]</scope>
</reference>
<keyword id="KW-0249">Electron transport</keyword>
<keyword id="KW-0349">Heme</keyword>
<keyword id="KW-0408">Iron</keyword>
<keyword id="KW-0472">Membrane</keyword>
<keyword id="KW-0479">Metal-binding</keyword>
<keyword id="KW-0496">Mitochondrion</keyword>
<keyword id="KW-0999">Mitochondrion inner membrane</keyword>
<keyword id="KW-0679">Respiratory chain</keyword>
<keyword id="KW-0812">Transmembrane</keyword>
<keyword id="KW-1133">Transmembrane helix</keyword>
<keyword id="KW-0813">Transport</keyword>
<keyword id="KW-0830">Ubiquinone</keyword>
<comment type="function">
    <text evidence="2">Component of the ubiquinol-cytochrome c reductase complex (complex III or cytochrome b-c1 complex) that is part of the mitochondrial respiratory chain. The b-c1 complex mediates electron transfer from ubiquinol to cytochrome c. Contributes to the generation of a proton gradient across the mitochondrial membrane that is then used for ATP synthesis.</text>
</comment>
<comment type="cofactor">
    <cofactor evidence="2">
        <name>heme b</name>
        <dbReference type="ChEBI" id="CHEBI:60344"/>
    </cofactor>
    <text evidence="2">Binds 2 heme b groups non-covalently.</text>
</comment>
<comment type="subunit">
    <text evidence="2">The cytochrome bc1 complex contains 11 subunits: 3 respiratory subunits (MT-CYB, CYC1 and UQCRFS1), 2 core proteins (UQCRC1 and UQCRC2) and 6 low-molecular weight proteins (UQCRH/QCR6, UQCRB/QCR7, UQCRQ/QCR8, UQCR10/QCR9, UQCR11/QCR10 and a cleavage product of UQCRFS1). This cytochrome bc1 complex then forms a dimer.</text>
</comment>
<comment type="subcellular location">
    <subcellularLocation>
        <location evidence="2">Mitochondrion inner membrane</location>
        <topology evidence="2">Multi-pass membrane protein</topology>
    </subcellularLocation>
</comment>
<comment type="miscellaneous">
    <text evidence="1">Heme 1 (or BL or b562) is low-potential and absorbs at about 562 nm, and heme 2 (or BH or b566) is high-potential and absorbs at about 566 nm.</text>
</comment>
<comment type="similarity">
    <text evidence="3 4">Belongs to the cytochrome b family.</text>
</comment>
<comment type="caution">
    <text evidence="2">The full-length protein contains only eight transmembrane helices, not nine as predicted by bioinformatics tools.</text>
</comment>
<gene>
    <name type="primary">MT-CYB</name>
    <name type="synonym">COB</name>
    <name type="synonym">CYTB</name>
    <name type="synonym">MTCYB</name>
</gene>
<protein>
    <recommendedName>
        <fullName>Cytochrome b</fullName>
    </recommendedName>
    <alternativeName>
        <fullName>Complex III subunit 3</fullName>
    </alternativeName>
    <alternativeName>
        <fullName>Complex III subunit III</fullName>
    </alternativeName>
    <alternativeName>
        <fullName>Cytochrome b-c1 complex subunit 3</fullName>
    </alternativeName>
    <alternativeName>
        <fullName>Ubiquinol-cytochrome-c reductase complex cytochrome b subunit</fullName>
    </alternativeName>
</protein>